<accession>P57028</accession>
<accession>A1ISV2</accession>
<evidence type="ECO:0000255" key="1">
    <source>
        <dbReference type="HAMAP-Rule" id="MF_00974"/>
    </source>
</evidence>
<comment type="function">
    <text evidence="1">RNA polymerase that catalyzes the synthesis of short RNA molecules used as primers for DNA polymerase during DNA replication.</text>
</comment>
<comment type="catalytic activity">
    <reaction evidence="1">
        <text>ssDNA + n NTP = ssDNA/pppN(pN)n-1 hybrid + (n-1) diphosphate.</text>
        <dbReference type="EC" id="2.7.7.101"/>
    </reaction>
</comment>
<comment type="cofactor">
    <cofactor evidence="1">
        <name>Zn(2+)</name>
        <dbReference type="ChEBI" id="CHEBI:29105"/>
    </cofactor>
    <text evidence="1">Binds 1 zinc ion per monomer.</text>
</comment>
<comment type="cofactor">
    <cofactor evidence="1">
        <name>Mg(2+)</name>
        <dbReference type="ChEBI" id="CHEBI:18420"/>
    </cofactor>
    <text evidence="1">Binds two Mg(2+) per subunit.</text>
</comment>
<comment type="subunit">
    <text evidence="1">Monomer. Interacts with DnaB.</text>
</comment>
<comment type="domain">
    <text evidence="1">Contains an N-terminal zinc-binding domain, a central core domain that contains the primase activity, and a C-terminal DnaB-binding domain.</text>
</comment>
<comment type="similarity">
    <text evidence="1">Belongs to the DnaG primase family.</text>
</comment>
<protein>
    <recommendedName>
        <fullName evidence="1">DNA primase</fullName>
        <ecNumber evidence="1">2.7.7.101</ecNumber>
    </recommendedName>
</protein>
<feature type="chain" id="PRO_0000180509" description="DNA primase">
    <location>
        <begin position="1"/>
        <end position="590"/>
    </location>
</feature>
<feature type="domain" description="Toprim" evidence="1">
    <location>
        <begin position="255"/>
        <end position="337"/>
    </location>
</feature>
<feature type="zinc finger region" description="CHC2-type" evidence="1">
    <location>
        <begin position="37"/>
        <end position="61"/>
    </location>
</feature>
<feature type="binding site" evidence="1">
    <location>
        <position position="261"/>
    </location>
    <ligand>
        <name>Mg(2+)</name>
        <dbReference type="ChEBI" id="CHEBI:18420"/>
        <label>1</label>
        <note>catalytic</note>
    </ligand>
</feature>
<feature type="binding site" evidence="1">
    <location>
        <position position="305"/>
    </location>
    <ligand>
        <name>Mg(2+)</name>
        <dbReference type="ChEBI" id="CHEBI:18420"/>
        <label>1</label>
        <note>catalytic</note>
    </ligand>
</feature>
<feature type="binding site" evidence="1">
    <location>
        <position position="305"/>
    </location>
    <ligand>
        <name>Mg(2+)</name>
        <dbReference type="ChEBI" id="CHEBI:18420"/>
        <label>2</label>
    </ligand>
</feature>
<feature type="binding site" evidence="1">
    <location>
        <position position="307"/>
    </location>
    <ligand>
        <name>Mg(2+)</name>
        <dbReference type="ChEBI" id="CHEBI:18420"/>
        <label>2</label>
    </ligand>
</feature>
<keyword id="KW-0235">DNA replication</keyword>
<keyword id="KW-0238">DNA-binding</keyword>
<keyword id="KW-0240">DNA-directed RNA polymerase</keyword>
<keyword id="KW-0460">Magnesium</keyword>
<keyword id="KW-0479">Metal-binding</keyword>
<keyword id="KW-0548">Nucleotidyltransferase</keyword>
<keyword id="KW-0639">Primosome</keyword>
<keyword id="KW-0804">Transcription</keyword>
<keyword id="KW-0808">Transferase</keyword>
<keyword id="KW-0862">Zinc</keyword>
<keyword id="KW-0863">Zinc-finger</keyword>
<gene>
    <name evidence="1" type="primary">dnaG</name>
    <name type="ordered locus">NMA1736</name>
</gene>
<proteinExistence type="inferred from homology"/>
<sequence length="590" mass="65726">MIPSDFIDELLAKTDIVDIIDEQVPLKKGGANYMACCPFHKEKTPSFSVSPTKQFYHCFSCGAHGSAIGFVMEHQGLSFPEAVQFLADRVGMVVPKVHGQNDNPEVRAERKKKQQTLEETTAAAADFYAQQLKFNPAAKAYLDKRGLSAEVIAHYGLGYAPDGWQPLTQVFQPYPNTALVDTGMVIDNEGRHYDRFRHRIMFPIRNPRGQVIGFGGRVLDDSKPKYLNSPDTPLFDKGKNLYGLYEGRAAVKEAGRILVVEGYMDVVALAQFGVGYGVAALGTATTAEHVKILMRQADSIYFCFDGDSAGRKAAWRALENALPQLKDDKSLHFLFLPEEHDPDSYIRAYGKAQFEDALLNQSKPLSEYFWEHLSDGIHLNTQEGKAELVKTSSPLLAQITAPALAYLLKQRLSELVGIDPDNLAQLLGQEAPKRHVKQKNYKLPPISVKQPVMPTLVQRQIRSLLINPDWAAYIDLPDYLALDGDFACLANLAETIKNHPSVPATAQVLEHMRGSPYEETINRIFRSALQSEEMEGGGEEDCENFQIGIKKLLNELKYSQIEALKQKSLQSGLNESEKKLLLSLLTAKQN</sequence>
<name>DNAG_NEIMA</name>
<organism>
    <name type="scientific">Neisseria meningitidis serogroup A / serotype 4A (strain DSM 15465 / Z2491)</name>
    <dbReference type="NCBI Taxonomy" id="122587"/>
    <lineage>
        <taxon>Bacteria</taxon>
        <taxon>Pseudomonadati</taxon>
        <taxon>Pseudomonadota</taxon>
        <taxon>Betaproteobacteria</taxon>
        <taxon>Neisseriales</taxon>
        <taxon>Neisseriaceae</taxon>
        <taxon>Neisseria</taxon>
    </lineage>
</organism>
<dbReference type="EC" id="2.7.7.101" evidence="1"/>
<dbReference type="EMBL" id="AL157959">
    <property type="protein sequence ID" value="CAM08864.1"/>
    <property type="molecule type" value="Genomic_DNA"/>
</dbReference>
<dbReference type="PIR" id="H81797">
    <property type="entry name" value="H81797"/>
</dbReference>
<dbReference type="RefSeq" id="WP_002247003.1">
    <property type="nucleotide sequence ID" value="NC_003116.1"/>
</dbReference>
<dbReference type="SMR" id="P57028"/>
<dbReference type="EnsemblBacteria" id="CAM08864">
    <property type="protein sequence ID" value="CAM08864"/>
    <property type="gene ID" value="NMA1736"/>
</dbReference>
<dbReference type="GeneID" id="93387840"/>
<dbReference type="KEGG" id="nma:NMA1736"/>
<dbReference type="HOGENOM" id="CLU_013501_5_2_4"/>
<dbReference type="Proteomes" id="UP000000626">
    <property type="component" value="Chromosome"/>
</dbReference>
<dbReference type="GO" id="GO:0005737">
    <property type="term" value="C:cytoplasm"/>
    <property type="evidence" value="ECO:0007669"/>
    <property type="project" value="TreeGrafter"/>
</dbReference>
<dbReference type="GO" id="GO:0000428">
    <property type="term" value="C:DNA-directed RNA polymerase complex"/>
    <property type="evidence" value="ECO:0007669"/>
    <property type="project" value="UniProtKB-KW"/>
</dbReference>
<dbReference type="GO" id="GO:1990077">
    <property type="term" value="C:primosome complex"/>
    <property type="evidence" value="ECO:0007669"/>
    <property type="project" value="UniProtKB-KW"/>
</dbReference>
<dbReference type="GO" id="GO:0003677">
    <property type="term" value="F:DNA binding"/>
    <property type="evidence" value="ECO:0007669"/>
    <property type="project" value="UniProtKB-KW"/>
</dbReference>
<dbReference type="GO" id="GO:0003899">
    <property type="term" value="F:DNA-directed RNA polymerase activity"/>
    <property type="evidence" value="ECO:0007669"/>
    <property type="project" value="InterPro"/>
</dbReference>
<dbReference type="GO" id="GO:0008270">
    <property type="term" value="F:zinc ion binding"/>
    <property type="evidence" value="ECO:0007669"/>
    <property type="project" value="UniProtKB-UniRule"/>
</dbReference>
<dbReference type="GO" id="GO:0006269">
    <property type="term" value="P:DNA replication, synthesis of primer"/>
    <property type="evidence" value="ECO:0007669"/>
    <property type="project" value="UniProtKB-UniRule"/>
</dbReference>
<dbReference type="CDD" id="cd03364">
    <property type="entry name" value="TOPRIM_DnaG_primases"/>
    <property type="match status" value="1"/>
</dbReference>
<dbReference type="FunFam" id="3.40.1360.10:FF:000002">
    <property type="entry name" value="DNA primase"/>
    <property type="match status" value="1"/>
</dbReference>
<dbReference type="FunFam" id="3.90.580.10:FF:000001">
    <property type="entry name" value="DNA primase"/>
    <property type="match status" value="1"/>
</dbReference>
<dbReference type="FunFam" id="3.90.980.10:FF:000001">
    <property type="entry name" value="DNA primase"/>
    <property type="match status" value="1"/>
</dbReference>
<dbReference type="Gene3D" id="3.40.1360.10">
    <property type="match status" value="1"/>
</dbReference>
<dbReference type="Gene3D" id="3.90.980.10">
    <property type="entry name" value="DNA primase, catalytic core, N-terminal domain"/>
    <property type="match status" value="1"/>
</dbReference>
<dbReference type="Gene3D" id="1.10.860.10">
    <property type="entry name" value="DNAb Helicase, Chain A"/>
    <property type="match status" value="1"/>
</dbReference>
<dbReference type="Gene3D" id="1.20.50.20">
    <property type="entry name" value="DnaG, RNA polymerase domain, helical bundle"/>
    <property type="match status" value="1"/>
</dbReference>
<dbReference type="Gene3D" id="3.90.580.10">
    <property type="entry name" value="Zinc finger, CHC2-type domain"/>
    <property type="match status" value="1"/>
</dbReference>
<dbReference type="HAMAP" id="MF_00974">
    <property type="entry name" value="DNA_primase_DnaG"/>
    <property type="match status" value="1"/>
</dbReference>
<dbReference type="InterPro" id="IPR016136">
    <property type="entry name" value="DNA_helicase_N/primase_C"/>
</dbReference>
<dbReference type="InterPro" id="IPR037068">
    <property type="entry name" value="DNA_primase_core_N_sf"/>
</dbReference>
<dbReference type="InterPro" id="IPR019475">
    <property type="entry name" value="DNA_primase_DnaB-bd"/>
</dbReference>
<dbReference type="InterPro" id="IPR006295">
    <property type="entry name" value="DNA_primase_DnaG"/>
</dbReference>
<dbReference type="InterPro" id="IPR013173">
    <property type="entry name" value="DNA_primase_DnaG_DnaB-bd_dom"/>
</dbReference>
<dbReference type="InterPro" id="IPR036977">
    <property type="entry name" value="DNA_primase_Znf_CHC2"/>
</dbReference>
<dbReference type="InterPro" id="IPR030846">
    <property type="entry name" value="DnaG_bac"/>
</dbReference>
<dbReference type="InterPro" id="IPR013264">
    <property type="entry name" value="DNAG_N"/>
</dbReference>
<dbReference type="InterPro" id="IPR050219">
    <property type="entry name" value="DnaG_primase"/>
</dbReference>
<dbReference type="InterPro" id="IPR034151">
    <property type="entry name" value="TOPRIM_DnaG_bac"/>
</dbReference>
<dbReference type="InterPro" id="IPR006171">
    <property type="entry name" value="TOPRIM_dom"/>
</dbReference>
<dbReference type="InterPro" id="IPR002694">
    <property type="entry name" value="Znf_CHC2"/>
</dbReference>
<dbReference type="NCBIfam" id="TIGR01391">
    <property type="entry name" value="dnaG"/>
    <property type="match status" value="1"/>
</dbReference>
<dbReference type="PANTHER" id="PTHR30313">
    <property type="entry name" value="DNA PRIMASE"/>
    <property type="match status" value="1"/>
</dbReference>
<dbReference type="PANTHER" id="PTHR30313:SF2">
    <property type="entry name" value="DNA PRIMASE"/>
    <property type="match status" value="1"/>
</dbReference>
<dbReference type="Pfam" id="PF10410">
    <property type="entry name" value="DnaB_bind"/>
    <property type="match status" value="1"/>
</dbReference>
<dbReference type="Pfam" id="PF08278">
    <property type="entry name" value="DnaG_DnaB_bind"/>
    <property type="match status" value="1"/>
</dbReference>
<dbReference type="Pfam" id="PF08275">
    <property type="entry name" value="DNAG_N"/>
    <property type="match status" value="1"/>
</dbReference>
<dbReference type="Pfam" id="PF13155">
    <property type="entry name" value="Toprim_2"/>
    <property type="match status" value="1"/>
</dbReference>
<dbReference type="Pfam" id="PF01807">
    <property type="entry name" value="Zn_ribbon_DnaG"/>
    <property type="match status" value="1"/>
</dbReference>
<dbReference type="PIRSF" id="PIRSF002811">
    <property type="entry name" value="DnaG"/>
    <property type="match status" value="1"/>
</dbReference>
<dbReference type="SMART" id="SM00766">
    <property type="entry name" value="DnaG_DnaB_bind"/>
    <property type="match status" value="1"/>
</dbReference>
<dbReference type="SMART" id="SM00493">
    <property type="entry name" value="TOPRIM"/>
    <property type="match status" value="1"/>
</dbReference>
<dbReference type="SMART" id="SM00400">
    <property type="entry name" value="ZnF_CHCC"/>
    <property type="match status" value="1"/>
</dbReference>
<dbReference type="SUPFAM" id="SSF56731">
    <property type="entry name" value="DNA primase core"/>
    <property type="match status" value="1"/>
</dbReference>
<dbReference type="SUPFAM" id="SSF117023">
    <property type="entry name" value="DNA primase DnaG, C-terminal domain"/>
    <property type="match status" value="1"/>
</dbReference>
<dbReference type="SUPFAM" id="SSF57783">
    <property type="entry name" value="Zinc beta-ribbon"/>
    <property type="match status" value="1"/>
</dbReference>
<dbReference type="PROSITE" id="PS50880">
    <property type="entry name" value="TOPRIM"/>
    <property type="match status" value="1"/>
</dbReference>
<reference key="1">
    <citation type="journal article" date="2000" name="Nature">
        <title>Complete DNA sequence of a serogroup A strain of Neisseria meningitidis Z2491.</title>
        <authorList>
            <person name="Parkhill J."/>
            <person name="Achtman M."/>
            <person name="James K.D."/>
            <person name="Bentley S.D."/>
            <person name="Churcher C.M."/>
            <person name="Klee S.R."/>
            <person name="Morelli G."/>
            <person name="Basham D."/>
            <person name="Brown D."/>
            <person name="Chillingworth T."/>
            <person name="Davies R.M."/>
            <person name="Davis P."/>
            <person name="Devlin K."/>
            <person name="Feltwell T."/>
            <person name="Hamlin N."/>
            <person name="Holroyd S."/>
            <person name="Jagels K."/>
            <person name="Leather S."/>
            <person name="Moule S."/>
            <person name="Mungall K.L."/>
            <person name="Quail M.A."/>
            <person name="Rajandream M.A."/>
            <person name="Rutherford K.M."/>
            <person name="Simmonds M."/>
            <person name="Skelton J."/>
            <person name="Whitehead S."/>
            <person name="Spratt B.G."/>
            <person name="Barrell B.G."/>
        </authorList>
    </citation>
    <scope>NUCLEOTIDE SEQUENCE [LARGE SCALE GENOMIC DNA]</scope>
    <source>
        <strain>DSM 15465 / Z2491</strain>
    </source>
</reference>